<organism>
    <name type="scientific">Rattus norvegicus</name>
    <name type="common">Rat</name>
    <dbReference type="NCBI Taxonomy" id="10116"/>
    <lineage>
        <taxon>Eukaryota</taxon>
        <taxon>Metazoa</taxon>
        <taxon>Chordata</taxon>
        <taxon>Craniata</taxon>
        <taxon>Vertebrata</taxon>
        <taxon>Euteleostomi</taxon>
        <taxon>Mammalia</taxon>
        <taxon>Eutheria</taxon>
        <taxon>Euarchontoglires</taxon>
        <taxon>Glires</taxon>
        <taxon>Rodentia</taxon>
        <taxon>Myomorpha</taxon>
        <taxon>Muroidea</taxon>
        <taxon>Muridae</taxon>
        <taxon>Murinae</taxon>
        <taxon>Rattus</taxon>
    </lineage>
</organism>
<name>TAAR3_RAT</name>
<reference key="1">
    <citation type="journal article" date="2005" name="Genomics">
        <title>Trace amine-associated receptors form structurally and functionally distinct subfamilies of novel G protein-coupled receptors.</title>
        <authorList>
            <person name="Lindemann L."/>
            <person name="Ebeling M."/>
            <person name="Kratochwil N.A."/>
            <person name="Bunzow J.R."/>
            <person name="Grandy D.K."/>
            <person name="Hoener M.C."/>
        </authorList>
    </citation>
    <scope>NUCLEOTIDE SEQUENCE [GENOMIC DNA]</scope>
    <source>
        <strain>WIST/Crl</strain>
    </source>
</reference>
<protein>
    <recommendedName>
        <fullName>Trace amine-associated receptor 3</fullName>
        <shortName>TaR-3</shortName>
        <shortName>Trace amine receptor 3</shortName>
    </recommendedName>
</protein>
<sequence length="342" mass="38658">MDLIYIPEDLSSCPKFGNKSCPPTNRSFRVRLIMYLLMTGAMVITIFGNLVIIISISHFKQLHSPTNFLILSMATTDFLLGFVIMPYSMVRSVESCWYFGDSFCKFHASFDMMLSLTSIFHLCSIAIDRFYAVCAPLHYTTTMTASMIKRLLFFCWAAPALFSFGLVLSEANVSGMQSYEILIACFNFCALTFNKFWGTILFTTCFFTPGSIMVGIYGKIFIVSRRHARALGNMPENTKGAGRNLSKKKDRKAAKTLGIVMGVFLACWLPCFLAVLIDPYLDYSTPIIVLDLLVWLGYFNSTCNPLIHGFFYPWFRKALEHIVSGKIFRSNSDTANLFPEAH</sequence>
<gene>
    <name type="primary">Taar3</name>
</gene>
<dbReference type="EMBL" id="AY702317">
    <property type="protein sequence ID" value="AAV70129.1"/>
    <property type="molecule type" value="Genomic_DNA"/>
</dbReference>
<dbReference type="RefSeq" id="NP_001009532.1">
    <property type="nucleotide sequence ID" value="NM_001009532.1"/>
</dbReference>
<dbReference type="SMR" id="Q5QD24"/>
<dbReference type="FunCoup" id="Q5QD24">
    <property type="interactions" value="32"/>
</dbReference>
<dbReference type="STRING" id="10116.ENSRNOP00000035248"/>
<dbReference type="GlyCosmos" id="Q5QD24">
    <property type="glycosylation" value="2 sites, No reported glycans"/>
</dbReference>
<dbReference type="GlyGen" id="Q5QD24">
    <property type="glycosylation" value="2 sites"/>
</dbReference>
<dbReference type="PaxDb" id="10116-ENSRNOP00000035248"/>
<dbReference type="Ensembl" id="ENSRNOT00000035539.3">
    <property type="protein sequence ID" value="ENSRNOP00000035248.2"/>
    <property type="gene ID" value="ENSRNOG00000025982.3"/>
</dbReference>
<dbReference type="GeneID" id="494319"/>
<dbReference type="KEGG" id="rno:494319"/>
<dbReference type="AGR" id="RGD:1359566"/>
<dbReference type="CTD" id="493809"/>
<dbReference type="RGD" id="1359566">
    <property type="gene designation" value="Taar3"/>
</dbReference>
<dbReference type="eggNOG" id="KOG3656">
    <property type="taxonomic scope" value="Eukaryota"/>
</dbReference>
<dbReference type="GeneTree" id="ENSGT00940000163260"/>
<dbReference type="HOGENOM" id="CLU_009579_11_0_1"/>
<dbReference type="InParanoid" id="Q5QD24"/>
<dbReference type="OMA" id="CALAFNK"/>
<dbReference type="OrthoDB" id="10042731at2759"/>
<dbReference type="PhylomeDB" id="Q5QD24"/>
<dbReference type="TreeFam" id="TF343107"/>
<dbReference type="Reactome" id="R-RNO-375280">
    <property type="pathway name" value="Amine ligand-binding receptors"/>
</dbReference>
<dbReference type="PRO" id="PR:Q5QD24"/>
<dbReference type="Proteomes" id="UP000002494">
    <property type="component" value="Chromosome 1"/>
</dbReference>
<dbReference type="Bgee" id="ENSRNOG00000025982">
    <property type="expression patterns" value="Expressed in testis"/>
</dbReference>
<dbReference type="ExpressionAtlas" id="Q5QD24">
    <property type="expression patterns" value="baseline"/>
</dbReference>
<dbReference type="GO" id="GO:0005886">
    <property type="term" value="C:plasma membrane"/>
    <property type="evidence" value="ECO:0000318"/>
    <property type="project" value="GO_Central"/>
</dbReference>
<dbReference type="GO" id="GO:0001594">
    <property type="term" value="F:trace-amine receptor activity"/>
    <property type="evidence" value="ECO:0000250"/>
    <property type="project" value="UniProtKB"/>
</dbReference>
<dbReference type="GO" id="GO:0007186">
    <property type="term" value="P:G protein-coupled receptor signaling pathway"/>
    <property type="evidence" value="ECO:0000318"/>
    <property type="project" value="GO_Central"/>
</dbReference>
<dbReference type="GO" id="GO:0007606">
    <property type="term" value="P:sensory perception of chemical stimulus"/>
    <property type="evidence" value="ECO:0000250"/>
    <property type="project" value="UniProtKB"/>
</dbReference>
<dbReference type="CDD" id="cd15312">
    <property type="entry name" value="7tmA_TAAR2_3_4"/>
    <property type="match status" value="1"/>
</dbReference>
<dbReference type="FunFam" id="1.20.1070.10:FF:000030">
    <property type="entry name" value="trace amine-associated receptor 1"/>
    <property type="match status" value="1"/>
</dbReference>
<dbReference type="Gene3D" id="1.20.1070.10">
    <property type="entry name" value="Rhodopsin 7-helix transmembrane proteins"/>
    <property type="match status" value="1"/>
</dbReference>
<dbReference type="InterPro" id="IPR000276">
    <property type="entry name" value="GPCR_Rhodpsn"/>
</dbReference>
<dbReference type="InterPro" id="IPR017452">
    <property type="entry name" value="GPCR_Rhodpsn_7TM"/>
</dbReference>
<dbReference type="InterPro" id="IPR050569">
    <property type="entry name" value="TAAR"/>
</dbReference>
<dbReference type="InterPro" id="IPR009132">
    <property type="entry name" value="TAAR_fam"/>
</dbReference>
<dbReference type="PANTHER" id="PTHR24249">
    <property type="entry name" value="HISTAMINE RECEPTOR-RELATED G-PROTEIN COUPLED RECEPTOR"/>
    <property type="match status" value="1"/>
</dbReference>
<dbReference type="PANTHER" id="PTHR24249:SF82">
    <property type="entry name" value="TRACE AMINE-ASSOCIATED RECEPTOR 3-RELATED"/>
    <property type="match status" value="1"/>
</dbReference>
<dbReference type="Pfam" id="PF00001">
    <property type="entry name" value="7tm_1"/>
    <property type="match status" value="1"/>
</dbReference>
<dbReference type="PRINTS" id="PR00237">
    <property type="entry name" value="GPCRRHODOPSN"/>
</dbReference>
<dbReference type="PRINTS" id="PR01830">
    <property type="entry name" value="TRACEAMINER"/>
</dbReference>
<dbReference type="SMART" id="SM01381">
    <property type="entry name" value="7TM_GPCR_Srsx"/>
    <property type="match status" value="1"/>
</dbReference>
<dbReference type="SUPFAM" id="SSF81321">
    <property type="entry name" value="Family A G protein-coupled receptor-like"/>
    <property type="match status" value="1"/>
</dbReference>
<dbReference type="PROSITE" id="PS00237">
    <property type="entry name" value="G_PROTEIN_RECEP_F1_1"/>
    <property type="match status" value="1"/>
</dbReference>
<dbReference type="PROSITE" id="PS50262">
    <property type="entry name" value="G_PROTEIN_RECEP_F1_2"/>
    <property type="match status" value="1"/>
</dbReference>
<evidence type="ECO:0000250" key="1">
    <source>
        <dbReference type="UniProtKB" id="Q5QD04"/>
    </source>
</evidence>
<evidence type="ECO:0000250" key="2">
    <source>
        <dbReference type="UniProtKB" id="Q5QD16"/>
    </source>
</evidence>
<evidence type="ECO:0000255" key="3"/>
<evidence type="ECO:0000255" key="4">
    <source>
        <dbReference type="PROSITE-ProRule" id="PRU00521"/>
    </source>
</evidence>
<feature type="chain" id="PRO_0000070151" description="Trace amine-associated receptor 3">
    <location>
        <begin position="1"/>
        <end position="342"/>
    </location>
</feature>
<feature type="topological domain" description="Extracellular" evidence="3">
    <location>
        <begin position="1"/>
        <end position="35"/>
    </location>
</feature>
<feature type="transmembrane region" description="Helical; Name=1" evidence="3">
    <location>
        <begin position="36"/>
        <end position="56"/>
    </location>
</feature>
<feature type="topological domain" description="Cytoplasmic" evidence="3">
    <location>
        <begin position="57"/>
        <end position="68"/>
    </location>
</feature>
<feature type="transmembrane region" description="Helical; Name=2" evidence="3">
    <location>
        <begin position="69"/>
        <end position="89"/>
    </location>
</feature>
<feature type="topological domain" description="Extracellular" evidence="3">
    <location>
        <begin position="90"/>
        <end position="150"/>
    </location>
</feature>
<feature type="transmembrane region" description="Helical; Name=3" evidence="3">
    <location>
        <begin position="151"/>
        <end position="168"/>
    </location>
</feature>
<feature type="topological domain" description="Cytoplasmic" evidence="3">
    <location>
        <begin position="169"/>
        <end position="172"/>
    </location>
</feature>
<feature type="transmembrane region" description="Helical; Name=4" evidence="3">
    <location>
        <begin position="173"/>
        <end position="193"/>
    </location>
</feature>
<feature type="topological domain" description="Extracellular" evidence="3">
    <location>
        <begin position="194"/>
        <end position="198"/>
    </location>
</feature>
<feature type="transmembrane region" description="Helical; Name=5" evidence="3">
    <location>
        <begin position="199"/>
        <end position="223"/>
    </location>
</feature>
<feature type="topological domain" description="Cytoplasmic" evidence="3">
    <location>
        <begin position="224"/>
        <end position="256"/>
    </location>
</feature>
<feature type="transmembrane region" description="Helical; Name=6" evidence="3">
    <location>
        <begin position="257"/>
        <end position="277"/>
    </location>
</feature>
<feature type="topological domain" description="Extracellular" evidence="3">
    <location>
        <begin position="278"/>
        <end position="286"/>
    </location>
</feature>
<feature type="transmembrane region" description="Helical; Name=7" evidence="3">
    <location>
        <begin position="287"/>
        <end position="307"/>
    </location>
</feature>
<feature type="topological domain" description="Cytoplasmic" evidence="3">
    <location>
        <begin position="308"/>
        <end position="342"/>
    </location>
</feature>
<feature type="region of interest" description="Extracellular Loop 2 (ECL2)" evidence="1">
    <location>
        <begin position="173"/>
        <end position="186"/>
    </location>
</feature>
<feature type="glycosylation site" description="N-linked (GlcNAc...) asparagine" evidence="3">
    <location>
        <position position="18"/>
    </location>
</feature>
<feature type="glycosylation site" description="N-linked (GlcNAc...) asparagine" evidence="3">
    <location>
        <position position="25"/>
    </location>
</feature>
<feature type="disulfide bond" evidence="1">
    <location>
        <begin position="21"/>
        <end position="185"/>
    </location>
</feature>
<feature type="disulfide bond" evidence="4">
    <location>
        <begin position="104"/>
        <end position="189"/>
    </location>
</feature>
<keyword id="KW-1003">Cell membrane</keyword>
<keyword id="KW-1015">Disulfide bond</keyword>
<keyword id="KW-0297">G-protein coupled receptor</keyword>
<keyword id="KW-0325">Glycoprotein</keyword>
<keyword id="KW-0472">Membrane</keyword>
<keyword id="KW-0675">Receptor</keyword>
<keyword id="KW-1185">Reference proteome</keyword>
<keyword id="KW-0807">Transducer</keyword>
<keyword id="KW-0812">Transmembrane</keyword>
<keyword id="KW-1133">Transmembrane helix</keyword>
<proteinExistence type="inferred from homology"/>
<accession>Q5QD24</accession>
<comment type="function">
    <text evidence="2">Olfactory receptor activated by several primary trace amines, including isoamylamine. Activated by isoamylamine and cyclohexylamine, but not to the corresponding alcohols, isoamylalcohol and cyclohexanol. This receptor is probably mediated by the G(s)-class of G-proteins which activate adenylate cyclase.</text>
</comment>
<comment type="subcellular location">
    <subcellularLocation>
        <location evidence="1">Cell membrane</location>
        <topology evidence="1">Multi-pass membrane protein</topology>
    </subcellularLocation>
</comment>
<comment type="domain">
    <text evidence="1">In addition to the well known disulfide bond common to G-protein coupled receptor 1 family, trace amine-associated receptors (TAARs) contain an unique disulfide bond (Cys-21-Cys-185) connecting the N-terminus to the extracellular Loop 2 (ECL2), which is required for agonist-induced receptor activation.</text>
</comment>
<comment type="similarity">
    <text evidence="4">Belongs to the G-protein coupled receptor 1 family.</text>
</comment>